<sequence>MEGSSKGLRKGAWTAEEDSLLRLCIDKYGEGKWHQVPLRAGLNRCRKSCRLRWLNYLKPSIKRGRLSNDEVDLLLRLHKLLGNRWSLIAGRLPGRTANDVKNYWNTHLSKKHESSCCKSKMKKKNIISPPTTPVQKIGVFKPRPRSFSVNNGCSHLNGLPEVDLIPSCLGLKKNNVCENSITCNKDDEKDDFVNNLMNGDNMWLENLLGENQEADAIVPEATTAEHGATLAFDVEQLWSLFDGETVELD</sequence>
<evidence type="ECO:0000255" key="1">
    <source>
        <dbReference type="PROSITE-ProRule" id="PRU00625"/>
    </source>
</evidence>
<evidence type="ECO:0000269" key="2">
    <source>
    </source>
</evidence>
<evidence type="ECO:0000269" key="3">
    <source>
    </source>
</evidence>
<evidence type="ECO:0000269" key="4">
    <source>
    </source>
</evidence>
<evidence type="ECO:0000269" key="5">
    <source>
    </source>
</evidence>
<evidence type="ECO:0000269" key="6">
    <source>
    </source>
</evidence>
<evidence type="ECO:0000305" key="7"/>
<gene>
    <name type="primary">MYB90</name>
    <name type="synonym">PAP2</name>
    <name type="ordered locus">At1g66390</name>
    <name type="ORF">T27F4.14</name>
</gene>
<protein>
    <recommendedName>
        <fullName>Transcription factor MYB90</fullName>
    </recommendedName>
    <alternativeName>
        <fullName>Myb-related protein 90</fullName>
        <shortName>AtMYB90</shortName>
    </alternativeName>
    <alternativeName>
        <fullName>Production of anthocyanin pigment 2 protein</fullName>
    </alternativeName>
</protein>
<comment type="function">
    <text evidence="2 4">Transcription activator, when associated with BHLH12/MYC1, EGL3, or GL3. Promotes the synthesis of phenylpropanoid-derived compounds such as anthocyanins.</text>
</comment>
<comment type="subunit">
    <text evidence="3 4">Interacts with BHLH12/MYC1, BHLH1/GL3/MYC6, BHLH2/EGL3/MYC146, and BHLH42/TT8.</text>
</comment>
<comment type="interaction">
    <interactant intactId="EBI-1545203">
        <id>Q9ZTC3</id>
    </interactant>
    <interactant intactId="EBI-1546379">
        <id>Q8W2F1</id>
        <label>BHLH12</label>
    </interactant>
    <organismsDiffer>false</organismsDiffer>
    <experiments>2</experiments>
</comment>
<comment type="interaction">
    <interactant intactId="EBI-1545203">
        <id>Q9ZTC3</id>
    </interactant>
    <interactant intactId="EBI-533398">
        <id>Q9CAD0</id>
        <label>BHLH2</label>
    </interactant>
    <organismsDiffer>false</organismsDiffer>
    <experiments>3</experiments>
</comment>
<comment type="interaction">
    <interactant intactId="EBI-1545203">
        <id>Q9ZTC3</id>
    </interactant>
    <interactant intactId="EBI-533348">
        <id>Q9FN69</id>
        <label>GL3</label>
    </interactant>
    <organismsDiffer>false</organismsDiffer>
    <experiments>2</experiments>
</comment>
<comment type="interaction">
    <interactant intactId="EBI-1545203">
        <id>Q9ZTC3</id>
    </interactant>
    <interactant intactId="EBI-395790">
        <id>Q9FT81</id>
        <label>TT8</label>
    </interactant>
    <organismsDiffer>false</organismsDiffer>
    <experiments>2</experiments>
</comment>
<comment type="subcellular location">
    <subcellularLocation>
        <location evidence="7">Nucleus</location>
    </subcellularLocation>
</comment>
<comment type="tissue specificity">
    <text evidence="6">Expressed only in leaves and siliques.</text>
</comment>
<comment type="induction">
    <text evidence="5 6">By sucrose, nitrogen deficiency, ethylene, UV light and drought.</text>
</comment>
<organism>
    <name type="scientific">Arabidopsis thaliana</name>
    <name type="common">Mouse-ear cress</name>
    <dbReference type="NCBI Taxonomy" id="3702"/>
    <lineage>
        <taxon>Eukaryota</taxon>
        <taxon>Viridiplantae</taxon>
        <taxon>Streptophyta</taxon>
        <taxon>Embryophyta</taxon>
        <taxon>Tracheophyta</taxon>
        <taxon>Spermatophyta</taxon>
        <taxon>Magnoliopsida</taxon>
        <taxon>eudicotyledons</taxon>
        <taxon>Gunneridae</taxon>
        <taxon>Pentapetalae</taxon>
        <taxon>rosids</taxon>
        <taxon>malvids</taxon>
        <taxon>Brassicales</taxon>
        <taxon>Brassicaceae</taxon>
        <taxon>Camelineae</taxon>
        <taxon>Arabidopsis</taxon>
    </lineage>
</organism>
<name>MYB90_ARATH</name>
<feature type="chain" id="PRO_0000285271" description="Transcription factor MYB90">
    <location>
        <begin position="1"/>
        <end position="249"/>
    </location>
</feature>
<feature type="domain" description="HTH myb-type 1" evidence="1">
    <location>
        <begin position="5"/>
        <end position="57"/>
    </location>
</feature>
<feature type="domain" description="HTH myb-type 2" evidence="1">
    <location>
        <begin position="58"/>
        <end position="112"/>
    </location>
</feature>
<feature type="DNA-binding region" description="H-T-H motif" evidence="1">
    <location>
        <begin position="33"/>
        <end position="57"/>
    </location>
</feature>
<feature type="DNA-binding region" description="H-T-H motif" evidence="1">
    <location>
        <begin position="85"/>
        <end position="108"/>
    </location>
</feature>
<accession>Q9ZTC3</accession>
<proteinExistence type="evidence at protein level"/>
<dbReference type="EMBL" id="AF062915">
    <property type="protein sequence ID" value="AAC83637.1"/>
    <property type="molecule type" value="mRNA"/>
</dbReference>
<dbReference type="EMBL" id="AF325124">
    <property type="protein sequence ID" value="AAG42002.1"/>
    <property type="molecule type" value="mRNA"/>
</dbReference>
<dbReference type="EMBL" id="AC020665">
    <property type="protein sequence ID" value="AAG52164.1"/>
    <property type="molecule type" value="Genomic_DNA"/>
</dbReference>
<dbReference type="EMBL" id="CP002684">
    <property type="protein sequence ID" value="AEE34503.1"/>
    <property type="molecule type" value="Genomic_DNA"/>
</dbReference>
<dbReference type="PIR" id="T51687">
    <property type="entry name" value="T51687"/>
</dbReference>
<dbReference type="RefSeq" id="NP_176813.1">
    <property type="nucleotide sequence ID" value="NM_105310.4"/>
</dbReference>
<dbReference type="SMR" id="Q9ZTC3"/>
<dbReference type="BioGRID" id="28178">
    <property type="interactions" value="9"/>
</dbReference>
<dbReference type="FunCoup" id="Q9ZTC3">
    <property type="interactions" value="2"/>
</dbReference>
<dbReference type="IntAct" id="Q9ZTC3">
    <property type="interactions" value="4"/>
</dbReference>
<dbReference type="STRING" id="3702.Q9ZTC3"/>
<dbReference type="PaxDb" id="3702-AT1G66390.1"/>
<dbReference type="EnsemblPlants" id="AT1G66390.1">
    <property type="protein sequence ID" value="AT1G66390.1"/>
    <property type="gene ID" value="AT1G66390"/>
</dbReference>
<dbReference type="GeneID" id="842957"/>
<dbReference type="Gramene" id="AT1G66390.1">
    <property type="protein sequence ID" value="AT1G66390.1"/>
    <property type="gene ID" value="AT1G66390"/>
</dbReference>
<dbReference type="KEGG" id="ath:AT1G66390"/>
<dbReference type="Araport" id="AT1G66390"/>
<dbReference type="TAIR" id="AT1G66390">
    <property type="gene designation" value="MYB90"/>
</dbReference>
<dbReference type="eggNOG" id="KOG0048">
    <property type="taxonomic scope" value="Eukaryota"/>
</dbReference>
<dbReference type="HOGENOM" id="CLU_028567_6_4_1"/>
<dbReference type="InParanoid" id="Q9ZTC3"/>
<dbReference type="OMA" id="DNMWLEN"/>
<dbReference type="PhylomeDB" id="Q9ZTC3"/>
<dbReference type="PRO" id="PR:Q9ZTC3"/>
<dbReference type="Proteomes" id="UP000006548">
    <property type="component" value="Chromosome 1"/>
</dbReference>
<dbReference type="ExpressionAtlas" id="Q9ZTC3">
    <property type="expression patterns" value="baseline and differential"/>
</dbReference>
<dbReference type="GO" id="GO:0005634">
    <property type="term" value="C:nucleus"/>
    <property type="evidence" value="ECO:0007669"/>
    <property type="project" value="UniProtKB-SubCell"/>
</dbReference>
<dbReference type="GO" id="GO:0003677">
    <property type="term" value="F:DNA binding"/>
    <property type="evidence" value="ECO:0007669"/>
    <property type="project" value="UniProtKB-KW"/>
</dbReference>
<dbReference type="GO" id="GO:0003700">
    <property type="term" value="F:DNA-binding transcription factor activity"/>
    <property type="evidence" value="ECO:0000250"/>
    <property type="project" value="TAIR"/>
</dbReference>
<dbReference type="GO" id="GO:0006355">
    <property type="term" value="P:regulation of DNA-templated transcription"/>
    <property type="evidence" value="ECO:0000304"/>
    <property type="project" value="TAIR"/>
</dbReference>
<dbReference type="CDD" id="cd00167">
    <property type="entry name" value="SANT"/>
    <property type="match status" value="2"/>
</dbReference>
<dbReference type="FunFam" id="1.10.10.60:FF:000218">
    <property type="entry name" value="Myb transcription factor"/>
    <property type="match status" value="1"/>
</dbReference>
<dbReference type="FunFam" id="1.10.10.60:FF:000561">
    <property type="entry name" value="Transcription factor MYB75"/>
    <property type="match status" value="1"/>
</dbReference>
<dbReference type="Gene3D" id="1.10.10.60">
    <property type="entry name" value="Homeodomain-like"/>
    <property type="match status" value="2"/>
</dbReference>
<dbReference type="InterPro" id="IPR009057">
    <property type="entry name" value="Homeodomain-like_sf"/>
</dbReference>
<dbReference type="InterPro" id="IPR017930">
    <property type="entry name" value="Myb_dom"/>
</dbReference>
<dbReference type="InterPro" id="IPR015495">
    <property type="entry name" value="Myb_TF_plants"/>
</dbReference>
<dbReference type="InterPro" id="IPR001005">
    <property type="entry name" value="SANT/Myb"/>
</dbReference>
<dbReference type="PANTHER" id="PTHR47999">
    <property type="entry name" value="TRANSCRIPTION FACTOR MYB8-RELATED-RELATED"/>
    <property type="match status" value="1"/>
</dbReference>
<dbReference type="PANTHER" id="PTHR47999:SF24">
    <property type="entry name" value="TRANSCRIPTION FACTOR MYB90"/>
    <property type="match status" value="1"/>
</dbReference>
<dbReference type="Pfam" id="PF00249">
    <property type="entry name" value="Myb_DNA-binding"/>
    <property type="match status" value="2"/>
</dbReference>
<dbReference type="SMART" id="SM00717">
    <property type="entry name" value="SANT"/>
    <property type="match status" value="2"/>
</dbReference>
<dbReference type="SUPFAM" id="SSF46689">
    <property type="entry name" value="Homeodomain-like"/>
    <property type="match status" value="1"/>
</dbReference>
<dbReference type="PROSITE" id="PS51294">
    <property type="entry name" value="HTH_MYB"/>
    <property type="match status" value="2"/>
</dbReference>
<keyword id="KW-0010">Activator</keyword>
<keyword id="KW-0238">DNA-binding</keyword>
<keyword id="KW-0539">Nucleus</keyword>
<keyword id="KW-1185">Reference proteome</keyword>
<keyword id="KW-0677">Repeat</keyword>
<keyword id="KW-0346">Stress response</keyword>
<keyword id="KW-0804">Transcription</keyword>
<keyword id="KW-0805">Transcription regulation</keyword>
<reference key="1">
    <citation type="journal article" date="1998" name="Plant J.">
        <title>Towards functional characterisation of the members of the R2R3-MYB gene family from Arabidopsis thaliana.</title>
        <authorList>
            <person name="Kranz H.D."/>
            <person name="Denekamp M."/>
            <person name="Greco R."/>
            <person name="Jin H.-L."/>
            <person name="Leyva A."/>
            <person name="Meissner R.C."/>
            <person name="Petroni K."/>
            <person name="Urzainqui A."/>
            <person name="Bevan M."/>
            <person name="Martin C."/>
            <person name="Smeekens S."/>
            <person name="Tonelli C."/>
            <person name="Paz-Ares J."/>
            <person name="Weisshaar B."/>
        </authorList>
    </citation>
    <scope>NUCLEOTIDE SEQUENCE [MRNA]</scope>
    <scope>TISSUE SPECIFICITY</scope>
    <scope>INDUCTION BY SUCROSE; NITROGEN DEFICIENCY; ETHYLENE; UV LIGHT AND DROUGHT</scope>
    <source>
        <strain>cv. Columbia</strain>
    </source>
</reference>
<reference key="2">
    <citation type="journal article" date="2000" name="Plant Cell">
        <title>Activation tagging identifies a conserved MYB regulator of phenylpropanoid biosynthesis.</title>
        <authorList>
            <person name="Borevitz J.O."/>
            <person name="Xia Y."/>
            <person name="Blount J."/>
            <person name="Dixon R.A."/>
            <person name="Lamb C."/>
        </authorList>
    </citation>
    <scope>NUCLEOTIDE SEQUENCE [GENOMIC DNA]</scope>
    <scope>FUNCTION</scope>
    <source>
        <strain>cv. Columbia</strain>
    </source>
</reference>
<reference key="3">
    <citation type="journal article" date="2000" name="Nature">
        <title>Sequence and analysis of chromosome 1 of the plant Arabidopsis thaliana.</title>
        <authorList>
            <person name="Theologis A."/>
            <person name="Ecker J.R."/>
            <person name="Palm C.J."/>
            <person name="Federspiel N.A."/>
            <person name="Kaul S."/>
            <person name="White O."/>
            <person name="Alonso J."/>
            <person name="Altafi H."/>
            <person name="Araujo R."/>
            <person name="Bowman C.L."/>
            <person name="Brooks S.Y."/>
            <person name="Buehler E."/>
            <person name="Chan A."/>
            <person name="Chao Q."/>
            <person name="Chen H."/>
            <person name="Cheuk R.F."/>
            <person name="Chin C.W."/>
            <person name="Chung M.K."/>
            <person name="Conn L."/>
            <person name="Conway A.B."/>
            <person name="Conway A.R."/>
            <person name="Creasy T.H."/>
            <person name="Dewar K."/>
            <person name="Dunn P."/>
            <person name="Etgu P."/>
            <person name="Feldblyum T.V."/>
            <person name="Feng J.-D."/>
            <person name="Fong B."/>
            <person name="Fujii C.Y."/>
            <person name="Gill J.E."/>
            <person name="Goldsmith A.D."/>
            <person name="Haas B."/>
            <person name="Hansen N.F."/>
            <person name="Hughes B."/>
            <person name="Huizar L."/>
            <person name="Hunter J.L."/>
            <person name="Jenkins J."/>
            <person name="Johnson-Hopson C."/>
            <person name="Khan S."/>
            <person name="Khaykin E."/>
            <person name="Kim C.J."/>
            <person name="Koo H.L."/>
            <person name="Kremenetskaia I."/>
            <person name="Kurtz D.B."/>
            <person name="Kwan A."/>
            <person name="Lam B."/>
            <person name="Langin-Hooper S."/>
            <person name="Lee A."/>
            <person name="Lee J.M."/>
            <person name="Lenz C.A."/>
            <person name="Li J.H."/>
            <person name="Li Y.-P."/>
            <person name="Lin X."/>
            <person name="Liu S.X."/>
            <person name="Liu Z.A."/>
            <person name="Luros J.S."/>
            <person name="Maiti R."/>
            <person name="Marziali A."/>
            <person name="Militscher J."/>
            <person name="Miranda M."/>
            <person name="Nguyen M."/>
            <person name="Nierman W.C."/>
            <person name="Osborne B.I."/>
            <person name="Pai G."/>
            <person name="Peterson J."/>
            <person name="Pham P.K."/>
            <person name="Rizzo M."/>
            <person name="Rooney T."/>
            <person name="Rowley D."/>
            <person name="Sakano H."/>
            <person name="Salzberg S.L."/>
            <person name="Schwartz J.R."/>
            <person name="Shinn P."/>
            <person name="Southwick A.M."/>
            <person name="Sun H."/>
            <person name="Tallon L.J."/>
            <person name="Tambunga G."/>
            <person name="Toriumi M.J."/>
            <person name="Town C.D."/>
            <person name="Utterback T."/>
            <person name="Van Aken S."/>
            <person name="Vaysberg M."/>
            <person name="Vysotskaia V.S."/>
            <person name="Walker M."/>
            <person name="Wu D."/>
            <person name="Yu G."/>
            <person name="Fraser C.M."/>
            <person name="Venter J.C."/>
            <person name="Davis R.W."/>
        </authorList>
    </citation>
    <scope>NUCLEOTIDE SEQUENCE [LARGE SCALE GENOMIC DNA]</scope>
    <source>
        <strain>cv. Columbia</strain>
    </source>
</reference>
<reference key="4">
    <citation type="journal article" date="2017" name="Plant J.">
        <title>Araport11: a complete reannotation of the Arabidopsis thaliana reference genome.</title>
        <authorList>
            <person name="Cheng C.Y."/>
            <person name="Krishnakumar V."/>
            <person name="Chan A.P."/>
            <person name="Thibaud-Nissen F."/>
            <person name="Schobel S."/>
            <person name="Town C.D."/>
        </authorList>
    </citation>
    <scope>GENOME REANNOTATION</scope>
    <source>
        <strain>cv. Columbia</strain>
    </source>
</reference>
<reference key="5">
    <citation type="journal article" date="2001" name="Curr. Opin. Plant Biol.">
        <title>The R2R3-MYB gene family in Arabidopsis thaliana.</title>
        <authorList>
            <person name="Stracke R."/>
            <person name="Werber M."/>
            <person name="Weisshaar B."/>
        </authorList>
    </citation>
    <scope>GENE FAMILY</scope>
    <scope>NOMENCLATURE</scope>
</reference>
<reference key="6">
    <citation type="journal article" date="2003" name="Development">
        <title>A network of redundant bHLH proteins functions in all TTG1-dependent pathways of Arabidopsis.</title>
        <authorList>
            <person name="Zhang F."/>
            <person name="Gonzalez A."/>
            <person name="Zhao M."/>
            <person name="Payne C.T."/>
            <person name="Lloyd A.M."/>
        </authorList>
    </citation>
    <scope>INTERACTION WITH BHLH2</scope>
</reference>
<reference key="7">
    <citation type="journal article" date="2004" name="Plant J.">
        <title>Comprehensive identification of Arabidopsis thaliana MYB transcription factors interacting with R/B-like BHLH proteins.</title>
        <authorList>
            <person name="Zimmermann I.M."/>
            <person name="Heim M.A."/>
            <person name="Weisshaar B."/>
            <person name="Uhrig J.F."/>
        </authorList>
    </citation>
    <scope>FUNCTION</scope>
    <scope>INTERACTION WITH BHLH12; BHLH1; BHLH2 AND BHLH42</scope>
</reference>
<reference key="8">
    <citation type="journal article" date="2006" name="Plant Mol. Biol.">
        <title>The MYB transcription factor superfamily of Arabidopsis: expression analysis and phylogenetic comparison with the rice MYB family.</title>
        <authorList>
            <person name="Chen Y."/>
            <person name="Yang X."/>
            <person name="He K."/>
            <person name="Liu M."/>
            <person name="Li J."/>
            <person name="Gao Z."/>
            <person name="Lin Z."/>
            <person name="Zhang Y."/>
            <person name="Wang X."/>
            <person name="Qiu X."/>
            <person name="Shen Y."/>
            <person name="Zhang L."/>
            <person name="Deng X."/>
            <person name="Luo J."/>
            <person name="Deng X.-W."/>
            <person name="Chen Z."/>
            <person name="Gu H."/>
            <person name="Qu L.-J."/>
        </authorList>
    </citation>
    <scope>GENE FAMILY</scope>
</reference>
<reference key="9">
    <citation type="journal article" date="2007" name="Planta">
        <title>Nitrogen deficiency enhances expression of specific MYB and bHLH transcription factors and accumulation of end products in the flavonoid pathway.</title>
        <authorList>
            <person name="Lea U.S."/>
            <person name="Slimestad R."/>
            <person name="Smedvig P."/>
            <person name="Lillo C."/>
        </authorList>
    </citation>
    <scope>INDUCTION BY NITROGEN DEFICIENCY</scope>
</reference>